<comment type="function">
    <text evidence="1">Catalyzes the hydrolysis of N-formyl-L-kynurenine to L-kynurenine, the second step in the kynurenine pathway of tryptophan degradation.</text>
</comment>
<comment type="catalytic activity">
    <reaction evidence="1">
        <text>N-formyl-L-kynurenine + H2O = L-kynurenine + formate + H(+)</text>
        <dbReference type="Rhea" id="RHEA:13009"/>
        <dbReference type="ChEBI" id="CHEBI:15377"/>
        <dbReference type="ChEBI" id="CHEBI:15378"/>
        <dbReference type="ChEBI" id="CHEBI:15740"/>
        <dbReference type="ChEBI" id="CHEBI:57959"/>
        <dbReference type="ChEBI" id="CHEBI:58629"/>
        <dbReference type="EC" id="3.5.1.9"/>
    </reaction>
</comment>
<comment type="cofactor">
    <cofactor evidence="1">
        <name>Zn(2+)</name>
        <dbReference type="ChEBI" id="CHEBI:29105"/>
    </cofactor>
    <text evidence="1">Binds 2 zinc ions per subunit.</text>
</comment>
<comment type="pathway">
    <text evidence="1">Amino-acid degradation; L-tryptophan degradation via kynurenine pathway; L-kynurenine from L-tryptophan: step 2/2.</text>
</comment>
<comment type="subunit">
    <text evidence="1">Homodimer.</text>
</comment>
<comment type="similarity">
    <text evidence="1">Belongs to the Cyclase 1 superfamily. KynB family.</text>
</comment>
<sequence>MKRLWDISPPVSAASPVFPGDTPYQQHWKWSLTPDCPVNVSEIRLSPHIGAHADAPLHYSNGAPAIGAVPLEPFLGPCRVIHALDCGPLILPEHLRHAADGLPPRVLVRTAEHAALDWWTDDFSAYAPHTIEWLAERGVVLIGLDTPSIDPASSKTLDSHHVILRRDMRVLENLLLDDVAEGDYELIALPLALAQADASPVRAILRELG</sequence>
<protein>
    <recommendedName>
        <fullName evidence="1">Kynurenine formamidase</fullName>
        <shortName evidence="1">KFA</shortName>
        <shortName evidence="1">KFase</shortName>
        <ecNumber evidence="1">3.5.1.9</ecNumber>
    </recommendedName>
    <alternativeName>
        <fullName evidence="1">Arylformamidase</fullName>
    </alternativeName>
    <alternativeName>
        <fullName evidence="1">N-formylkynurenine formamidase</fullName>
        <shortName evidence="1">FKF</shortName>
    </alternativeName>
</protein>
<name>KYNB_BORPD</name>
<organism>
    <name type="scientific">Bordetella petrii (strain ATCC BAA-461 / DSM 12804 / CCUG 43448)</name>
    <dbReference type="NCBI Taxonomy" id="340100"/>
    <lineage>
        <taxon>Bacteria</taxon>
        <taxon>Pseudomonadati</taxon>
        <taxon>Pseudomonadota</taxon>
        <taxon>Betaproteobacteria</taxon>
        <taxon>Burkholderiales</taxon>
        <taxon>Alcaligenaceae</taxon>
        <taxon>Bordetella</taxon>
    </lineage>
</organism>
<gene>
    <name evidence="1" type="primary">kynB</name>
    <name type="ordered locus">Bpet3150</name>
</gene>
<accession>A9IU29</accession>
<dbReference type="EC" id="3.5.1.9" evidence="1"/>
<dbReference type="EMBL" id="AM902716">
    <property type="protein sequence ID" value="CAP43492.1"/>
    <property type="molecule type" value="Genomic_DNA"/>
</dbReference>
<dbReference type="SMR" id="A9IU29"/>
<dbReference type="STRING" id="94624.Bpet3150"/>
<dbReference type="KEGG" id="bpt:Bpet3150"/>
<dbReference type="eggNOG" id="COG1878">
    <property type="taxonomic scope" value="Bacteria"/>
</dbReference>
<dbReference type="UniPathway" id="UPA00333">
    <property type="reaction ID" value="UER00454"/>
</dbReference>
<dbReference type="Proteomes" id="UP000001225">
    <property type="component" value="Chromosome"/>
</dbReference>
<dbReference type="GO" id="GO:0004061">
    <property type="term" value="F:arylformamidase activity"/>
    <property type="evidence" value="ECO:0000250"/>
    <property type="project" value="UniProtKB"/>
</dbReference>
<dbReference type="GO" id="GO:0004328">
    <property type="term" value="F:formamidase activity"/>
    <property type="evidence" value="ECO:0007669"/>
    <property type="project" value="InterPro"/>
</dbReference>
<dbReference type="GO" id="GO:0008270">
    <property type="term" value="F:zinc ion binding"/>
    <property type="evidence" value="ECO:0007669"/>
    <property type="project" value="UniProtKB-UniRule"/>
</dbReference>
<dbReference type="GO" id="GO:0043420">
    <property type="term" value="P:anthranilate metabolic process"/>
    <property type="evidence" value="ECO:0000250"/>
    <property type="project" value="UniProtKB"/>
</dbReference>
<dbReference type="GO" id="GO:0019441">
    <property type="term" value="P:L-tryptophan catabolic process to kynurenine"/>
    <property type="evidence" value="ECO:0000250"/>
    <property type="project" value="UniProtKB"/>
</dbReference>
<dbReference type="FunFam" id="3.50.30.50:FF:000001">
    <property type="entry name" value="Kynurenine formamidase"/>
    <property type="match status" value="1"/>
</dbReference>
<dbReference type="Gene3D" id="3.50.30.50">
    <property type="entry name" value="Putative cyclase"/>
    <property type="match status" value="1"/>
</dbReference>
<dbReference type="HAMAP" id="MF_01969">
    <property type="entry name" value="KynB"/>
    <property type="match status" value="1"/>
</dbReference>
<dbReference type="InterPro" id="IPR007325">
    <property type="entry name" value="KFase/CYL"/>
</dbReference>
<dbReference type="InterPro" id="IPR037175">
    <property type="entry name" value="KFase_sf"/>
</dbReference>
<dbReference type="InterPro" id="IPR017484">
    <property type="entry name" value="Kynurenine_formamidase_bac"/>
</dbReference>
<dbReference type="NCBIfam" id="TIGR03035">
    <property type="entry name" value="trp_arylform"/>
    <property type="match status" value="1"/>
</dbReference>
<dbReference type="PANTHER" id="PTHR31118">
    <property type="entry name" value="CYCLASE-LIKE PROTEIN 2"/>
    <property type="match status" value="1"/>
</dbReference>
<dbReference type="PANTHER" id="PTHR31118:SF32">
    <property type="entry name" value="KYNURENINE FORMAMIDASE"/>
    <property type="match status" value="1"/>
</dbReference>
<dbReference type="Pfam" id="PF04199">
    <property type="entry name" value="Cyclase"/>
    <property type="match status" value="1"/>
</dbReference>
<dbReference type="SUPFAM" id="SSF102198">
    <property type="entry name" value="Putative cyclase"/>
    <property type="match status" value="1"/>
</dbReference>
<proteinExistence type="inferred from homology"/>
<evidence type="ECO:0000255" key="1">
    <source>
        <dbReference type="HAMAP-Rule" id="MF_01969"/>
    </source>
</evidence>
<feature type="chain" id="PRO_0000362097" description="Kynurenine formamidase">
    <location>
        <begin position="1"/>
        <end position="209"/>
    </location>
</feature>
<feature type="active site" description="Proton donor/acceptor" evidence="1">
    <location>
        <position position="58"/>
    </location>
</feature>
<feature type="binding site" evidence="1">
    <location>
        <position position="18"/>
    </location>
    <ligand>
        <name>substrate</name>
    </ligand>
</feature>
<feature type="binding site" evidence="1">
    <location>
        <position position="48"/>
    </location>
    <ligand>
        <name>Zn(2+)</name>
        <dbReference type="ChEBI" id="CHEBI:29105"/>
        <label>1</label>
    </ligand>
</feature>
<feature type="binding site" evidence="1">
    <location>
        <position position="52"/>
    </location>
    <ligand>
        <name>Zn(2+)</name>
        <dbReference type="ChEBI" id="CHEBI:29105"/>
        <label>1</label>
    </ligand>
</feature>
<feature type="binding site" evidence="1">
    <location>
        <position position="54"/>
    </location>
    <ligand>
        <name>Zn(2+)</name>
        <dbReference type="ChEBI" id="CHEBI:29105"/>
        <label>1</label>
    </ligand>
</feature>
<feature type="binding site" evidence="1">
    <location>
        <position position="54"/>
    </location>
    <ligand>
        <name>Zn(2+)</name>
        <dbReference type="ChEBI" id="CHEBI:29105"/>
        <label>2</label>
    </ligand>
</feature>
<feature type="binding site" evidence="1">
    <location>
        <position position="160"/>
    </location>
    <ligand>
        <name>Zn(2+)</name>
        <dbReference type="ChEBI" id="CHEBI:29105"/>
        <label>2</label>
    </ligand>
</feature>
<feature type="binding site" evidence="1">
    <location>
        <position position="172"/>
    </location>
    <ligand>
        <name>Zn(2+)</name>
        <dbReference type="ChEBI" id="CHEBI:29105"/>
        <label>1</label>
    </ligand>
</feature>
<feature type="binding site" evidence="1">
    <location>
        <position position="172"/>
    </location>
    <ligand>
        <name>Zn(2+)</name>
        <dbReference type="ChEBI" id="CHEBI:29105"/>
        <label>2</label>
    </ligand>
</feature>
<reference key="1">
    <citation type="journal article" date="2008" name="BMC Genomics">
        <title>The missing link: Bordetella petrii is endowed with both the metabolic versatility of environmental bacteria and virulence traits of pathogenic Bordetellae.</title>
        <authorList>
            <person name="Gross R."/>
            <person name="Guzman C.A."/>
            <person name="Sebaihia M."/>
            <person name="Martin dos Santos V.A.P."/>
            <person name="Pieper D.H."/>
            <person name="Koebnik R."/>
            <person name="Lechner M."/>
            <person name="Bartels D."/>
            <person name="Buhrmester J."/>
            <person name="Choudhuri J.V."/>
            <person name="Ebensen T."/>
            <person name="Gaigalat L."/>
            <person name="Herrmann S."/>
            <person name="Khachane A.N."/>
            <person name="Larisch C."/>
            <person name="Link S."/>
            <person name="Linke B."/>
            <person name="Meyer F."/>
            <person name="Mormann S."/>
            <person name="Nakunst D."/>
            <person name="Rueckert C."/>
            <person name="Schneiker-Bekel S."/>
            <person name="Schulze K."/>
            <person name="Voerholter F.-J."/>
            <person name="Yevsa T."/>
            <person name="Engle J.T."/>
            <person name="Goldman W.E."/>
            <person name="Puehler A."/>
            <person name="Goebel U.B."/>
            <person name="Goesmann A."/>
            <person name="Bloecker H."/>
            <person name="Kaiser O."/>
            <person name="Martinez-Arias R."/>
        </authorList>
    </citation>
    <scope>NUCLEOTIDE SEQUENCE [LARGE SCALE GENOMIC DNA]</scope>
    <source>
        <strain>ATCC BAA-461 / DSM 12804 / CCUG 43448</strain>
    </source>
</reference>
<keyword id="KW-0378">Hydrolase</keyword>
<keyword id="KW-0479">Metal-binding</keyword>
<keyword id="KW-0823">Tryptophan catabolism</keyword>
<keyword id="KW-0862">Zinc</keyword>